<sequence length="157" mass="18899">MIVNYLKHKFYNLLTTMIVLFIFVLSGAIFLTFLGFGLYGLSRILIYFRLGDFTYNRSMYDNLLYYGSYIIFGYFIIFAVEHLMDYFRKMLPENAYFRGATFHLISYTVATTLFYFIIHLNYVYINIDFWVIMVIIGFLYVCKLQFYPESKNLNNRK</sequence>
<comment type="function">
    <text evidence="1">Involved in multidrug efflux.</text>
</comment>
<comment type="subcellular location">
    <subcellularLocation>
        <location evidence="3">Cell membrane</location>
        <topology evidence="3">Multi-pass membrane protein</topology>
    </subcellularLocation>
</comment>
<comment type="similarity">
    <text evidence="3">Belongs to the multidrug resistance efflux pump SepA family.</text>
</comment>
<name>MDEP_STAA1</name>
<feature type="chain" id="PRO_0000351487" description="Multidrug resistance efflux pump SepA">
    <location>
        <begin position="1"/>
        <end position="157"/>
    </location>
</feature>
<feature type="transmembrane region" description="Helical" evidence="2">
    <location>
        <begin position="18"/>
        <end position="38"/>
    </location>
</feature>
<feature type="transmembrane region" description="Helical" evidence="2">
    <location>
        <begin position="63"/>
        <end position="83"/>
    </location>
</feature>
<feature type="transmembrane region" description="Helical" evidence="2">
    <location>
        <begin position="100"/>
        <end position="120"/>
    </location>
</feature>
<feature type="transmembrane region" description="Helical" evidence="2">
    <location>
        <begin position="122"/>
        <end position="142"/>
    </location>
</feature>
<organism>
    <name type="scientific">Staphylococcus aureus (strain Mu3 / ATCC 700698)</name>
    <dbReference type="NCBI Taxonomy" id="418127"/>
    <lineage>
        <taxon>Bacteria</taxon>
        <taxon>Bacillati</taxon>
        <taxon>Bacillota</taxon>
        <taxon>Bacilli</taxon>
        <taxon>Bacillales</taxon>
        <taxon>Staphylococcaceae</taxon>
        <taxon>Staphylococcus</taxon>
    </lineage>
</organism>
<reference key="1">
    <citation type="journal article" date="2008" name="Antimicrob. Agents Chemother.">
        <title>Mutated response regulator graR is responsible for phenotypic conversion of Staphylococcus aureus from heterogeneous vancomycin-intermediate resistance to vancomycin-intermediate resistance.</title>
        <authorList>
            <person name="Neoh H.-M."/>
            <person name="Cui L."/>
            <person name="Yuzawa H."/>
            <person name="Takeuchi F."/>
            <person name="Matsuo M."/>
            <person name="Hiramatsu K."/>
        </authorList>
    </citation>
    <scope>NUCLEOTIDE SEQUENCE [LARGE SCALE GENOMIC DNA]</scope>
    <source>
        <strain>Mu3 / ATCC 700698</strain>
    </source>
</reference>
<proteinExistence type="inferred from homology"/>
<accession>A7X534</accession>
<gene>
    <name type="primary">sepA</name>
    <name type="ordered locus">SAHV_2151</name>
</gene>
<dbReference type="EMBL" id="AP009324">
    <property type="protein sequence ID" value="BAF79034.1"/>
    <property type="molecule type" value="Genomic_DNA"/>
</dbReference>
<dbReference type="RefSeq" id="WP_000636857.1">
    <property type="nucleotide sequence ID" value="NZ_CTYB01000047.1"/>
</dbReference>
<dbReference type="KEGG" id="saw:SAHV_2151"/>
<dbReference type="HOGENOM" id="CLU_151983_0_0_9"/>
<dbReference type="GO" id="GO:0005886">
    <property type="term" value="C:plasma membrane"/>
    <property type="evidence" value="ECO:0007669"/>
    <property type="project" value="UniProtKB-SubCell"/>
</dbReference>
<dbReference type="InterPro" id="IPR031396">
    <property type="entry name" value="SepA"/>
</dbReference>
<dbReference type="Pfam" id="PF17080">
    <property type="entry name" value="SepA"/>
    <property type="match status" value="1"/>
</dbReference>
<evidence type="ECO:0000250" key="1"/>
<evidence type="ECO:0000255" key="2"/>
<evidence type="ECO:0000305" key="3"/>
<keyword id="KW-1003">Cell membrane</keyword>
<keyword id="KW-0472">Membrane</keyword>
<keyword id="KW-0812">Transmembrane</keyword>
<keyword id="KW-1133">Transmembrane helix</keyword>
<keyword id="KW-0813">Transport</keyword>
<protein>
    <recommendedName>
        <fullName>Multidrug resistance efflux pump SepA</fullName>
    </recommendedName>
    <alternativeName>
        <fullName>Antiseptic resistance protein SepA</fullName>
    </alternativeName>
    <alternativeName>
        <fullName>Staphylococcal efflux pump A</fullName>
    </alternativeName>
</protein>